<accession>B1KUY5</accession>
<proteinExistence type="inferred from homology"/>
<protein>
    <recommendedName>
        <fullName evidence="1">Aspartate 1-decarboxylase</fullName>
        <ecNumber evidence="1">4.1.1.11</ecNumber>
    </recommendedName>
    <alternativeName>
        <fullName evidence="1">Aspartate alpha-decarboxylase</fullName>
    </alternativeName>
    <component>
        <recommendedName>
            <fullName evidence="1">Aspartate 1-decarboxylase beta chain</fullName>
        </recommendedName>
    </component>
    <component>
        <recommendedName>
            <fullName evidence="1">Aspartate 1-decarboxylase alpha chain</fullName>
        </recommendedName>
    </component>
</protein>
<reference key="1">
    <citation type="journal article" date="2007" name="PLoS ONE">
        <title>Analysis of the neurotoxin complex genes in Clostridium botulinum A1-A4 and B1 strains: BoNT/A3, /Ba4 and /B1 clusters are located within plasmids.</title>
        <authorList>
            <person name="Smith T.J."/>
            <person name="Hill K.K."/>
            <person name="Foley B.T."/>
            <person name="Detter J.C."/>
            <person name="Munk A.C."/>
            <person name="Bruce D.C."/>
            <person name="Doggett N.A."/>
            <person name="Smith L.A."/>
            <person name="Marks J.D."/>
            <person name="Xie G."/>
            <person name="Brettin T.S."/>
        </authorList>
    </citation>
    <scope>NUCLEOTIDE SEQUENCE [LARGE SCALE GENOMIC DNA]</scope>
    <source>
        <strain>Loch Maree / Type A3</strain>
    </source>
</reference>
<sequence length="127" mass="14232">MTITMLKSKIHRATVTEANLNYVGSITIDKALMDKSNILEYEKVQIVDIDNGNRFETYVIAGEENSGVICLNGAAARMVQKGDKIIIMSYCSLTIDEANKFNPTVLFVDNKNNIEKLTNYEKHGEII</sequence>
<comment type="function">
    <text evidence="1">Catalyzes the pyruvoyl-dependent decarboxylation of aspartate to produce beta-alanine.</text>
</comment>
<comment type="catalytic activity">
    <reaction evidence="1">
        <text>L-aspartate + H(+) = beta-alanine + CO2</text>
        <dbReference type="Rhea" id="RHEA:19497"/>
        <dbReference type="ChEBI" id="CHEBI:15378"/>
        <dbReference type="ChEBI" id="CHEBI:16526"/>
        <dbReference type="ChEBI" id="CHEBI:29991"/>
        <dbReference type="ChEBI" id="CHEBI:57966"/>
        <dbReference type="EC" id="4.1.1.11"/>
    </reaction>
</comment>
<comment type="cofactor">
    <cofactor evidence="1">
        <name>pyruvate</name>
        <dbReference type="ChEBI" id="CHEBI:15361"/>
    </cofactor>
    <text evidence="1">Binds 1 pyruvoyl group covalently per subunit.</text>
</comment>
<comment type="pathway">
    <text evidence="1">Cofactor biosynthesis; (R)-pantothenate biosynthesis; beta-alanine from L-aspartate: step 1/1.</text>
</comment>
<comment type="subunit">
    <text evidence="1">Heterooctamer of four alpha and four beta subunits.</text>
</comment>
<comment type="subcellular location">
    <subcellularLocation>
        <location evidence="1">Cytoplasm</location>
    </subcellularLocation>
</comment>
<comment type="PTM">
    <text evidence="1">Is synthesized initially as an inactive proenzyme, which is activated by self-cleavage at a specific serine bond to produce a beta-subunit with a hydroxyl group at its C-terminus and an alpha-subunit with a pyruvoyl group at its N-terminus.</text>
</comment>
<comment type="similarity">
    <text evidence="1">Belongs to the PanD family.</text>
</comment>
<feature type="chain" id="PRO_1000191956" description="Aspartate 1-decarboxylase beta chain" evidence="1">
    <location>
        <begin position="1"/>
        <end position="24"/>
    </location>
</feature>
<feature type="chain" id="PRO_1000191957" description="Aspartate 1-decarboxylase alpha chain" evidence="1">
    <location>
        <begin position="25"/>
        <end position="127"/>
    </location>
</feature>
<feature type="active site" description="Schiff-base intermediate with substrate; via pyruvic acid" evidence="1">
    <location>
        <position position="25"/>
    </location>
</feature>
<feature type="active site" description="Proton donor" evidence="1">
    <location>
        <position position="58"/>
    </location>
</feature>
<feature type="binding site" evidence="1">
    <location>
        <position position="57"/>
    </location>
    <ligand>
        <name>substrate</name>
    </ligand>
</feature>
<feature type="binding site" evidence="1">
    <location>
        <begin position="73"/>
        <end position="75"/>
    </location>
    <ligand>
        <name>substrate</name>
    </ligand>
</feature>
<feature type="modified residue" description="Pyruvic acid (Ser)" evidence="1">
    <location>
        <position position="25"/>
    </location>
</feature>
<gene>
    <name evidence="1" type="primary">panD</name>
    <name type="ordered locus">CLK_3625</name>
</gene>
<name>PAND_CLOBM</name>
<dbReference type="EC" id="4.1.1.11" evidence="1"/>
<dbReference type="EMBL" id="CP000962">
    <property type="protein sequence ID" value="ACA53866.1"/>
    <property type="molecule type" value="Genomic_DNA"/>
</dbReference>
<dbReference type="RefSeq" id="WP_012342044.1">
    <property type="nucleotide sequence ID" value="NC_010520.1"/>
</dbReference>
<dbReference type="SMR" id="B1KUY5"/>
<dbReference type="KEGG" id="cbl:CLK_3625"/>
<dbReference type="HOGENOM" id="CLU_115305_2_0_9"/>
<dbReference type="UniPathway" id="UPA00028">
    <property type="reaction ID" value="UER00002"/>
</dbReference>
<dbReference type="GO" id="GO:0005829">
    <property type="term" value="C:cytosol"/>
    <property type="evidence" value="ECO:0007669"/>
    <property type="project" value="TreeGrafter"/>
</dbReference>
<dbReference type="GO" id="GO:0004068">
    <property type="term" value="F:aspartate 1-decarboxylase activity"/>
    <property type="evidence" value="ECO:0007669"/>
    <property type="project" value="UniProtKB-UniRule"/>
</dbReference>
<dbReference type="GO" id="GO:0006523">
    <property type="term" value="P:alanine biosynthetic process"/>
    <property type="evidence" value="ECO:0007669"/>
    <property type="project" value="InterPro"/>
</dbReference>
<dbReference type="GO" id="GO:0015940">
    <property type="term" value="P:pantothenate biosynthetic process"/>
    <property type="evidence" value="ECO:0007669"/>
    <property type="project" value="UniProtKB-UniRule"/>
</dbReference>
<dbReference type="CDD" id="cd06919">
    <property type="entry name" value="Asp_decarbox"/>
    <property type="match status" value="1"/>
</dbReference>
<dbReference type="Gene3D" id="2.40.40.20">
    <property type="match status" value="1"/>
</dbReference>
<dbReference type="HAMAP" id="MF_00446">
    <property type="entry name" value="PanD"/>
    <property type="match status" value="1"/>
</dbReference>
<dbReference type="InterPro" id="IPR009010">
    <property type="entry name" value="Asp_de-COase-like_dom_sf"/>
</dbReference>
<dbReference type="InterPro" id="IPR003190">
    <property type="entry name" value="Asp_decarbox"/>
</dbReference>
<dbReference type="NCBIfam" id="TIGR00223">
    <property type="entry name" value="panD"/>
    <property type="match status" value="1"/>
</dbReference>
<dbReference type="PANTHER" id="PTHR21012">
    <property type="entry name" value="ASPARTATE 1-DECARBOXYLASE"/>
    <property type="match status" value="1"/>
</dbReference>
<dbReference type="PANTHER" id="PTHR21012:SF0">
    <property type="entry name" value="ASPARTATE 1-DECARBOXYLASE"/>
    <property type="match status" value="1"/>
</dbReference>
<dbReference type="Pfam" id="PF02261">
    <property type="entry name" value="Asp_decarbox"/>
    <property type="match status" value="1"/>
</dbReference>
<dbReference type="PIRSF" id="PIRSF006246">
    <property type="entry name" value="Asp_decarbox"/>
    <property type="match status" value="1"/>
</dbReference>
<dbReference type="SUPFAM" id="SSF50692">
    <property type="entry name" value="ADC-like"/>
    <property type="match status" value="1"/>
</dbReference>
<organism>
    <name type="scientific">Clostridium botulinum (strain Loch Maree / Type A3)</name>
    <dbReference type="NCBI Taxonomy" id="498214"/>
    <lineage>
        <taxon>Bacteria</taxon>
        <taxon>Bacillati</taxon>
        <taxon>Bacillota</taxon>
        <taxon>Clostridia</taxon>
        <taxon>Eubacteriales</taxon>
        <taxon>Clostridiaceae</taxon>
        <taxon>Clostridium</taxon>
    </lineage>
</organism>
<evidence type="ECO:0000255" key="1">
    <source>
        <dbReference type="HAMAP-Rule" id="MF_00446"/>
    </source>
</evidence>
<keyword id="KW-0068">Autocatalytic cleavage</keyword>
<keyword id="KW-0963">Cytoplasm</keyword>
<keyword id="KW-0210">Decarboxylase</keyword>
<keyword id="KW-0456">Lyase</keyword>
<keyword id="KW-0566">Pantothenate biosynthesis</keyword>
<keyword id="KW-0670">Pyruvate</keyword>
<keyword id="KW-0704">Schiff base</keyword>
<keyword id="KW-0865">Zymogen</keyword>